<protein>
    <recommendedName>
        <fullName>Ig heavy chain V region BCL1</fullName>
    </recommendedName>
</protein>
<proteinExistence type="predicted"/>
<reference key="1">
    <citation type="journal article" date="1982" name="Proc. Natl. Acad. Sci. U.S.A.">
        <title>Simultaneous expression of immunoglobulin mu and delta heavy chains by a cloned B-cell lymphoma: a single copy of the VH gene is shared by two adjacent CH genes.</title>
        <authorList>
            <person name="Knapp M.R."/>
            <person name="Liu C.-P."/>
            <person name="Newell N."/>
            <person name="Ward R.B."/>
            <person name="Tucker P.W."/>
            <person name="Strober S."/>
            <person name="Blattner F.R."/>
        </authorList>
    </citation>
    <scope>NUCLEOTIDE SEQUENCE [GENOMIC DNA]</scope>
</reference>
<name>HVM15_MOUSE</name>
<dbReference type="EMBL" id="J00494">
    <property type="protein sequence ID" value="AAA38130.1"/>
    <property type="molecule type" value="Genomic_DNA"/>
</dbReference>
<dbReference type="PIR" id="A02042">
    <property type="entry name" value="HVMSB1"/>
</dbReference>
<dbReference type="SMR" id="P01759"/>
<dbReference type="FunCoup" id="P01759">
    <property type="interactions" value="436"/>
</dbReference>
<dbReference type="InParanoid" id="P01759"/>
<dbReference type="PhylomeDB" id="P01759"/>
<dbReference type="Proteomes" id="UP000000589">
    <property type="component" value="Unplaced"/>
</dbReference>
<dbReference type="RNAct" id="P01759">
    <property type="molecule type" value="protein"/>
</dbReference>
<dbReference type="GO" id="GO:0005576">
    <property type="term" value="C:extracellular region"/>
    <property type="evidence" value="ECO:0007669"/>
    <property type="project" value="UniProtKB-ARBA"/>
</dbReference>
<dbReference type="GO" id="GO:0019814">
    <property type="term" value="C:immunoglobulin complex"/>
    <property type="evidence" value="ECO:0007669"/>
    <property type="project" value="UniProtKB-KW"/>
</dbReference>
<dbReference type="GO" id="GO:0003823">
    <property type="term" value="F:antigen binding"/>
    <property type="evidence" value="ECO:0000318"/>
    <property type="project" value="GO_Central"/>
</dbReference>
<dbReference type="GO" id="GO:0016064">
    <property type="term" value="P:immunoglobulin mediated immune response"/>
    <property type="evidence" value="ECO:0000318"/>
    <property type="project" value="GO_Central"/>
</dbReference>
<dbReference type="CDD" id="cd04981">
    <property type="entry name" value="IgV_H"/>
    <property type="match status" value="1"/>
</dbReference>
<dbReference type="FunFam" id="2.60.40.10:FF:001025">
    <property type="entry name" value="Immunoglobulin heavy variable V1-74"/>
    <property type="match status" value="1"/>
</dbReference>
<dbReference type="Gene3D" id="2.60.40.10">
    <property type="entry name" value="Immunoglobulins"/>
    <property type="match status" value="1"/>
</dbReference>
<dbReference type="InterPro" id="IPR007110">
    <property type="entry name" value="Ig-like_dom"/>
</dbReference>
<dbReference type="InterPro" id="IPR036179">
    <property type="entry name" value="Ig-like_dom_sf"/>
</dbReference>
<dbReference type="InterPro" id="IPR013783">
    <property type="entry name" value="Ig-like_fold"/>
</dbReference>
<dbReference type="InterPro" id="IPR003599">
    <property type="entry name" value="Ig_sub"/>
</dbReference>
<dbReference type="InterPro" id="IPR013106">
    <property type="entry name" value="Ig_V-set"/>
</dbReference>
<dbReference type="InterPro" id="IPR050199">
    <property type="entry name" value="IgHV"/>
</dbReference>
<dbReference type="PANTHER" id="PTHR23266">
    <property type="entry name" value="IMMUNOGLOBULIN HEAVY CHAIN"/>
    <property type="match status" value="1"/>
</dbReference>
<dbReference type="Pfam" id="PF07686">
    <property type="entry name" value="V-set"/>
    <property type="match status" value="1"/>
</dbReference>
<dbReference type="SMART" id="SM00409">
    <property type="entry name" value="IG"/>
    <property type="match status" value="1"/>
</dbReference>
<dbReference type="SMART" id="SM00406">
    <property type="entry name" value="IGv"/>
    <property type="match status" value="1"/>
</dbReference>
<dbReference type="SUPFAM" id="SSF48726">
    <property type="entry name" value="Immunoglobulin"/>
    <property type="match status" value="1"/>
</dbReference>
<dbReference type="PROSITE" id="PS50835">
    <property type="entry name" value="IG_LIKE"/>
    <property type="match status" value="1"/>
</dbReference>
<accession>P01759</accession>
<organism>
    <name type="scientific">Mus musculus</name>
    <name type="common">Mouse</name>
    <dbReference type="NCBI Taxonomy" id="10090"/>
    <lineage>
        <taxon>Eukaryota</taxon>
        <taxon>Metazoa</taxon>
        <taxon>Chordata</taxon>
        <taxon>Craniata</taxon>
        <taxon>Vertebrata</taxon>
        <taxon>Euteleostomi</taxon>
        <taxon>Mammalia</taxon>
        <taxon>Eutheria</taxon>
        <taxon>Euarchontoglires</taxon>
        <taxon>Glires</taxon>
        <taxon>Rodentia</taxon>
        <taxon>Myomorpha</taxon>
        <taxon>Muroidea</taxon>
        <taxon>Muridae</taxon>
        <taxon>Murinae</taxon>
        <taxon>Mus</taxon>
        <taxon>Mus</taxon>
    </lineage>
</organism>
<keyword id="KW-1064">Adaptive immunity</keyword>
<keyword id="KW-0391">Immunity</keyword>
<keyword id="KW-1280">Immunoglobulin</keyword>
<keyword id="KW-1185">Reference proteome</keyword>
<keyword id="KW-0732">Signal</keyword>
<sequence>MGWSCIIFFLVATATGVHSQVQLQQSGPEVVRPGVSVKISCKGSGYTFTDYAMHWVKQSHAKSLEWIGVISTYNGNTSYNQKFKGKATMTVDKSSSTVHMELARLTSEDSANLYCARYYGNYFDYWGQGTTLTVSS</sequence>
<feature type="signal peptide">
    <location>
        <begin position="1"/>
        <end position="19"/>
    </location>
</feature>
<feature type="chain" id="PRO_0000015225" description="Ig heavy chain V region BCL1">
    <location>
        <begin position="20"/>
        <end position="136"/>
    </location>
</feature>
<feature type="domain" description="Ig-like">
    <location>
        <begin position="20"/>
        <end position="135"/>
    </location>
</feature>
<feature type="non-terminal residue">
    <location>
        <position position="136"/>
    </location>
</feature>